<evidence type="ECO:0000255" key="1">
    <source>
        <dbReference type="HAMAP-Rule" id="MF_00012"/>
    </source>
</evidence>
<reference key="1">
    <citation type="journal article" date="2013" name="Proc. Natl. Acad. Sci. U.S.A.">
        <title>Polynucleobacter necessarius, a model for genome reduction in both free-living and symbiotic bacteria.</title>
        <authorList>
            <person name="Boscaro V."/>
            <person name="Felletti M."/>
            <person name="Vannini C."/>
            <person name="Ackerman M.S."/>
            <person name="Chain P.S."/>
            <person name="Malfatti S."/>
            <person name="Vergez L.M."/>
            <person name="Shin M."/>
            <person name="Doak T.G."/>
            <person name="Lynch M."/>
            <person name="Petroni G."/>
        </authorList>
    </citation>
    <scope>NUCLEOTIDE SEQUENCE [LARGE SCALE GENOMIC DNA]</scope>
    <source>
        <strain>STIR1</strain>
    </source>
</reference>
<feature type="chain" id="PRO_1000089398" description="Dihydroxy-acid dehydratase">
    <location>
        <begin position="1"/>
        <end position="563"/>
    </location>
</feature>
<feature type="active site" description="Proton acceptor" evidence="1">
    <location>
        <position position="474"/>
    </location>
</feature>
<feature type="binding site" evidence="1">
    <location>
        <position position="51"/>
    </location>
    <ligand>
        <name>[2Fe-2S] cluster</name>
        <dbReference type="ChEBI" id="CHEBI:190135"/>
    </ligand>
</feature>
<feature type="binding site" evidence="1">
    <location>
        <position position="83"/>
    </location>
    <ligand>
        <name>Mg(2+)</name>
        <dbReference type="ChEBI" id="CHEBI:18420"/>
    </ligand>
</feature>
<feature type="binding site" evidence="1">
    <location>
        <position position="124"/>
    </location>
    <ligand>
        <name>[2Fe-2S] cluster</name>
        <dbReference type="ChEBI" id="CHEBI:190135"/>
    </ligand>
</feature>
<feature type="binding site" evidence="1">
    <location>
        <position position="125"/>
    </location>
    <ligand>
        <name>Mg(2+)</name>
        <dbReference type="ChEBI" id="CHEBI:18420"/>
    </ligand>
</feature>
<feature type="binding site" description="via carbamate group" evidence="1">
    <location>
        <position position="126"/>
    </location>
    <ligand>
        <name>Mg(2+)</name>
        <dbReference type="ChEBI" id="CHEBI:18420"/>
    </ligand>
</feature>
<feature type="binding site" evidence="1">
    <location>
        <position position="196"/>
    </location>
    <ligand>
        <name>[2Fe-2S] cluster</name>
        <dbReference type="ChEBI" id="CHEBI:190135"/>
    </ligand>
</feature>
<feature type="binding site" evidence="1">
    <location>
        <position position="448"/>
    </location>
    <ligand>
        <name>Mg(2+)</name>
        <dbReference type="ChEBI" id="CHEBI:18420"/>
    </ligand>
</feature>
<feature type="modified residue" description="N6-carboxylysine" evidence="1">
    <location>
        <position position="126"/>
    </location>
</feature>
<sequence>MKRLNERSRMVTEGVARAPNRSMYYAIGYEEKDFVKPMVGVANGHSTITPCNSGLQKLADAAVSALEGAGAKAQMFGTPTVSDGIGMGTEGMKYSLVSREVIADSIETCVNGLWQDGVVVIGGCDKNMPGGMMALARTNVPGIYVYGGTIKPGHYKGKDLNIVSAFEAVGEFTSGRLSEEDLKGVEQHACPGSGSCGGMYTANTMSSAFEALGMSLPYSSTMANEDAEKVASTHDSAVVLVEAIKKNLRPRDIITKKSIENAVSVIMAVGGSTNAVLHFLAITSAAEIDWTIDDFERIRKRVPVIVDMKPSGTYLATDLHQAGGIPQVMKILLDDGLLHGDCMTITGKTVAEVLKDVPSVPRADQKVIRTLDNPLYKQGHLAILKGNISPEGCVTKITGLKNPSITGPARVFDSEDDAMAAIMAQKIKDGDIVVIRYEGPKGGPGMREMLAPTSALVGQGLGESVGLITDGRFSGGTWGMVVGHVAPEAYVGGTIALIHEGDSVTIDAHKLLIQLNVDDAEIAKRRAAWKQPKPRYTRGLLAKYAKLASTASKGAVTDLNLND</sequence>
<proteinExistence type="inferred from homology"/>
<gene>
    <name evidence="1" type="primary">ilvD</name>
    <name type="ordered locus">Pnec_1170</name>
</gene>
<keyword id="KW-0001">2Fe-2S</keyword>
<keyword id="KW-0028">Amino-acid biosynthesis</keyword>
<keyword id="KW-0100">Branched-chain amino acid biosynthesis</keyword>
<keyword id="KW-0408">Iron</keyword>
<keyword id="KW-0411">Iron-sulfur</keyword>
<keyword id="KW-0456">Lyase</keyword>
<keyword id="KW-0460">Magnesium</keyword>
<keyword id="KW-0479">Metal-binding</keyword>
<organism>
    <name type="scientific">Polynucleobacter necessarius subsp. necessarius (strain STIR1)</name>
    <dbReference type="NCBI Taxonomy" id="452638"/>
    <lineage>
        <taxon>Bacteria</taxon>
        <taxon>Pseudomonadati</taxon>
        <taxon>Pseudomonadota</taxon>
        <taxon>Betaproteobacteria</taxon>
        <taxon>Burkholderiales</taxon>
        <taxon>Burkholderiaceae</taxon>
        <taxon>Polynucleobacter</taxon>
    </lineage>
</organism>
<protein>
    <recommendedName>
        <fullName evidence="1">Dihydroxy-acid dehydratase</fullName>
        <shortName evidence="1">DAD</shortName>
        <ecNumber evidence="1">4.2.1.9</ecNumber>
    </recommendedName>
</protein>
<name>ILVD_POLNS</name>
<accession>B1XVE9</accession>
<comment type="function">
    <text evidence="1">Functions in the biosynthesis of branched-chain amino acids. Catalyzes the dehydration of (2R,3R)-2,3-dihydroxy-3-methylpentanoate (2,3-dihydroxy-3-methylvalerate) into 2-oxo-3-methylpentanoate (2-oxo-3-methylvalerate) and of (2R)-2,3-dihydroxy-3-methylbutanoate (2,3-dihydroxyisovalerate) into 2-oxo-3-methylbutanoate (2-oxoisovalerate), the penultimate precursor to L-isoleucine and L-valine, respectively.</text>
</comment>
<comment type="catalytic activity">
    <reaction evidence="1">
        <text>(2R)-2,3-dihydroxy-3-methylbutanoate = 3-methyl-2-oxobutanoate + H2O</text>
        <dbReference type="Rhea" id="RHEA:24809"/>
        <dbReference type="ChEBI" id="CHEBI:11851"/>
        <dbReference type="ChEBI" id="CHEBI:15377"/>
        <dbReference type="ChEBI" id="CHEBI:49072"/>
        <dbReference type="EC" id="4.2.1.9"/>
    </reaction>
    <physiologicalReaction direction="left-to-right" evidence="1">
        <dbReference type="Rhea" id="RHEA:24810"/>
    </physiologicalReaction>
</comment>
<comment type="catalytic activity">
    <reaction evidence="1">
        <text>(2R,3R)-2,3-dihydroxy-3-methylpentanoate = (S)-3-methyl-2-oxopentanoate + H2O</text>
        <dbReference type="Rhea" id="RHEA:27694"/>
        <dbReference type="ChEBI" id="CHEBI:15377"/>
        <dbReference type="ChEBI" id="CHEBI:35146"/>
        <dbReference type="ChEBI" id="CHEBI:49258"/>
        <dbReference type="EC" id="4.2.1.9"/>
    </reaction>
    <physiologicalReaction direction="left-to-right" evidence="1">
        <dbReference type="Rhea" id="RHEA:27695"/>
    </physiologicalReaction>
</comment>
<comment type="cofactor">
    <cofactor evidence="1">
        <name>[2Fe-2S] cluster</name>
        <dbReference type="ChEBI" id="CHEBI:190135"/>
    </cofactor>
    <text evidence="1">Binds 1 [2Fe-2S] cluster per subunit. This cluster acts as a Lewis acid cofactor.</text>
</comment>
<comment type="cofactor">
    <cofactor evidence="1">
        <name>Mg(2+)</name>
        <dbReference type="ChEBI" id="CHEBI:18420"/>
    </cofactor>
</comment>
<comment type="pathway">
    <text evidence="1">Amino-acid biosynthesis; L-isoleucine biosynthesis; L-isoleucine from 2-oxobutanoate: step 3/4.</text>
</comment>
<comment type="pathway">
    <text evidence="1">Amino-acid biosynthesis; L-valine biosynthesis; L-valine from pyruvate: step 3/4.</text>
</comment>
<comment type="subunit">
    <text evidence="1">Homodimer.</text>
</comment>
<comment type="similarity">
    <text evidence="1">Belongs to the IlvD/Edd family.</text>
</comment>
<dbReference type="EC" id="4.2.1.9" evidence="1"/>
<dbReference type="EMBL" id="CP001010">
    <property type="protein sequence ID" value="ACB44326.1"/>
    <property type="molecule type" value="Genomic_DNA"/>
</dbReference>
<dbReference type="SMR" id="B1XVE9"/>
<dbReference type="STRING" id="452638.Pnec_1170"/>
<dbReference type="KEGG" id="pne:Pnec_1170"/>
<dbReference type="eggNOG" id="COG0129">
    <property type="taxonomic scope" value="Bacteria"/>
</dbReference>
<dbReference type="HOGENOM" id="CLU_014271_4_2_4"/>
<dbReference type="OrthoDB" id="9807077at2"/>
<dbReference type="UniPathway" id="UPA00047">
    <property type="reaction ID" value="UER00057"/>
</dbReference>
<dbReference type="UniPathway" id="UPA00049">
    <property type="reaction ID" value="UER00061"/>
</dbReference>
<dbReference type="GO" id="GO:0051537">
    <property type="term" value="F:2 iron, 2 sulfur cluster binding"/>
    <property type="evidence" value="ECO:0007669"/>
    <property type="project" value="UniProtKB-UniRule"/>
</dbReference>
<dbReference type="GO" id="GO:0004160">
    <property type="term" value="F:dihydroxy-acid dehydratase activity"/>
    <property type="evidence" value="ECO:0007669"/>
    <property type="project" value="UniProtKB-UniRule"/>
</dbReference>
<dbReference type="GO" id="GO:0000287">
    <property type="term" value="F:magnesium ion binding"/>
    <property type="evidence" value="ECO:0007669"/>
    <property type="project" value="UniProtKB-UniRule"/>
</dbReference>
<dbReference type="GO" id="GO:0009097">
    <property type="term" value="P:isoleucine biosynthetic process"/>
    <property type="evidence" value="ECO:0007669"/>
    <property type="project" value="UniProtKB-UniRule"/>
</dbReference>
<dbReference type="GO" id="GO:0009099">
    <property type="term" value="P:L-valine biosynthetic process"/>
    <property type="evidence" value="ECO:0007669"/>
    <property type="project" value="UniProtKB-UniRule"/>
</dbReference>
<dbReference type="FunFam" id="3.50.30.80:FF:000001">
    <property type="entry name" value="Dihydroxy-acid dehydratase"/>
    <property type="match status" value="1"/>
</dbReference>
<dbReference type="Gene3D" id="3.50.30.80">
    <property type="entry name" value="IlvD/EDD C-terminal domain-like"/>
    <property type="match status" value="1"/>
</dbReference>
<dbReference type="HAMAP" id="MF_00012">
    <property type="entry name" value="IlvD"/>
    <property type="match status" value="1"/>
</dbReference>
<dbReference type="InterPro" id="IPR050165">
    <property type="entry name" value="DHAD_IlvD/Edd"/>
</dbReference>
<dbReference type="InterPro" id="IPR042096">
    <property type="entry name" value="Dihydro-acid_dehy_C"/>
</dbReference>
<dbReference type="InterPro" id="IPR004404">
    <property type="entry name" value="DihydroxyA_deHydtase"/>
</dbReference>
<dbReference type="InterPro" id="IPR020558">
    <property type="entry name" value="DiOHA_6PGluconate_deHydtase_CS"/>
</dbReference>
<dbReference type="InterPro" id="IPR056740">
    <property type="entry name" value="ILV_EDD_C"/>
</dbReference>
<dbReference type="InterPro" id="IPR000581">
    <property type="entry name" value="ILV_EDD_N"/>
</dbReference>
<dbReference type="InterPro" id="IPR037237">
    <property type="entry name" value="IlvD/EDD_N"/>
</dbReference>
<dbReference type="NCBIfam" id="TIGR00110">
    <property type="entry name" value="ilvD"/>
    <property type="match status" value="1"/>
</dbReference>
<dbReference type="NCBIfam" id="NF002068">
    <property type="entry name" value="PRK00911.1"/>
    <property type="match status" value="1"/>
</dbReference>
<dbReference type="PANTHER" id="PTHR21000">
    <property type="entry name" value="DIHYDROXY-ACID DEHYDRATASE DAD"/>
    <property type="match status" value="1"/>
</dbReference>
<dbReference type="PANTHER" id="PTHR21000:SF5">
    <property type="entry name" value="DIHYDROXY-ACID DEHYDRATASE, MITOCHONDRIAL"/>
    <property type="match status" value="1"/>
</dbReference>
<dbReference type="Pfam" id="PF24877">
    <property type="entry name" value="ILV_EDD_C"/>
    <property type="match status" value="1"/>
</dbReference>
<dbReference type="Pfam" id="PF00920">
    <property type="entry name" value="ILVD_EDD_N"/>
    <property type="match status" value="1"/>
</dbReference>
<dbReference type="SUPFAM" id="SSF143975">
    <property type="entry name" value="IlvD/EDD N-terminal domain-like"/>
    <property type="match status" value="1"/>
</dbReference>
<dbReference type="SUPFAM" id="SSF52016">
    <property type="entry name" value="LeuD/IlvD-like"/>
    <property type="match status" value="1"/>
</dbReference>
<dbReference type="PROSITE" id="PS00886">
    <property type="entry name" value="ILVD_EDD_1"/>
    <property type="match status" value="1"/>
</dbReference>
<dbReference type="PROSITE" id="PS00887">
    <property type="entry name" value="ILVD_EDD_2"/>
    <property type="match status" value="1"/>
</dbReference>